<sequence>MESLALLPTLSLSTTTTTSKATAFLRSSTTSLHHRRPHLSLSLSSTPKPTLTFSSHSHSHSLSSKPLLALKPLNATASSSSSPATTSPPPTKSGAKLIPLILSVSVGLLLRFAVPKPAELTPQAWQLLAIFLSTVAGLVLSPLPVGAWAFLGVTASVVTKTLPFPTAFCAFTNEVIWLIVISFFFARGFVKTGLGDRIATYFVKWLGKSTLGLSYGLTISEALVAPAMPSTTARAGGIFLPIIKSLSISSGSLPGGESRKKLGTYLIMTQFQSAGNSSALFLTAAAQNLLCLKLAEELGVKIASPWVFWLKAASLPAFVALLLTPLILYKLYPPELKDTPEAPALAAEKLKNMGPVTKNEWVMVGTMLLAVSLWVFGEKIGVSSVVAAMLGLSVLLLLGVLDWNDCLNEKSAWDTLAWFAVLVGMASQLTNLGIVSWMSGCVARSLKTMNLSWPAAFGILQAAYFFVHYLFASQTGHVGALYSAFLAMNIASGVPGVLAALALAYNTNLFGALTHYSSGQAAVYYGAGYVDLPDVFKMGFIMAVINATIWTVVGGVWWKILGIY</sequence>
<protein>
    <recommendedName>
        <fullName>Dicarboxylate transporter 2, chloroplastic</fullName>
    </recommendedName>
    <alternativeName>
        <fullName>Glutamate/malate translocator</fullName>
    </alternativeName>
</protein>
<reference key="1">
    <citation type="journal article" date="2003" name="Plant J.">
        <title>The Arabidopsis mutant dct is deficient in the plastidic glutamate/malate translocator DiT2.</title>
        <authorList>
            <person name="Renne P."/>
            <person name="Dressen U."/>
            <person name="Hebbeker U."/>
            <person name="Hille D."/>
            <person name="Flugge U.I."/>
            <person name="Westhoff P."/>
            <person name="Weber A.P."/>
        </authorList>
    </citation>
    <scope>NUCLEOTIDE SEQUENCE [MRNA]</scope>
    <scope>FUNCTION</scope>
    <scope>BIOPHYSICOCHEMICAL PROPERTIES</scope>
    <scope>TISSUE SPECIFICITY</scope>
</reference>
<gene>
    <name type="primary">DIT2</name>
</gene>
<dbReference type="EMBL" id="AY123846">
    <property type="protein sequence ID" value="AAM89396.1"/>
    <property type="molecule type" value="mRNA"/>
</dbReference>
<dbReference type="SMR" id="Q8L7Z9"/>
<dbReference type="OrthoDB" id="1695362at2759"/>
<dbReference type="SABIO-RK" id="Q8L7Z9"/>
<dbReference type="Proteomes" id="UP001155700">
    <property type="component" value="Unplaced"/>
</dbReference>
<dbReference type="GO" id="GO:0009941">
    <property type="term" value="C:chloroplast envelope"/>
    <property type="evidence" value="ECO:0000318"/>
    <property type="project" value="GO_Central"/>
</dbReference>
<dbReference type="GO" id="GO:0009706">
    <property type="term" value="C:chloroplast inner membrane"/>
    <property type="evidence" value="ECO:0007669"/>
    <property type="project" value="UniProtKB-SubCell"/>
</dbReference>
<dbReference type="GO" id="GO:0005313">
    <property type="term" value="F:L-glutamate transmembrane transporter activity"/>
    <property type="evidence" value="ECO:0000314"/>
    <property type="project" value="UniProtKB"/>
</dbReference>
<dbReference type="GO" id="GO:0015140">
    <property type="term" value="F:malate transmembrane transporter activity"/>
    <property type="evidence" value="ECO:0000314"/>
    <property type="project" value="UniProtKB"/>
</dbReference>
<dbReference type="GO" id="GO:0015131">
    <property type="term" value="F:oxaloacetate transmembrane transporter activity"/>
    <property type="evidence" value="ECO:0000318"/>
    <property type="project" value="GO_Central"/>
</dbReference>
<dbReference type="GO" id="GO:0015813">
    <property type="term" value="P:L-glutamate transmembrane transport"/>
    <property type="evidence" value="ECO:0000314"/>
    <property type="project" value="UniProtKB"/>
</dbReference>
<dbReference type="GO" id="GO:0071423">
    <property type="term" value="P:malate transmembrane transport"/>
    <property type="evidence" value="ECO:0000314"/>
    <property type="project" value="UniProtKB"/>
</dbReference>
<dbReference type="InterPro" id="IPR030676">
    <property type="entry name" value="CitT-rel"/>
</dbReference>
<dbReference type="InterPro" id="IPR001898">
    <property type="entry name" value="SLC13A/DASS"/>
</dbReference>
<dbReference type="NCBIfam" id="TIGR00785">
    <property type="entry name" value="dass"/>
    <property type="match status" value="1"/>
</dbReference>
<dbReference type="PANTHER" id="PTHR42826">
    <property type="entry name" value="DICARBOXYLATE TRANSPORTER 2.1, CHLOROPLASTIC"/>
    <property type="match status" value="1"/>
</dbReference>
<dbReference type="Pfam" id="PF00939">
    <property type="entry name" value="Na_sulph_symp"/>
    <property type="match status" value="1"/>
</dbReference>
<feature type="transit peptide" description="Chloroplast" evidence="1">
    <location>
        <begin position="1"/>
        <end position="22"/>
    </location>
</feature>
<feature type="chain" id="PRO_0000419186" description="Dicarboxylate transporter 2, chloroplastic">
    <location>
        <begin position="23"/>
        <end position="564"/>
    </location>
</feature>
<feature type="transmembrane region" description="Helical" evidence="1">
    <location>
        <begin position="94"/>
        <end position="114"/>
    </location>
</feature>
<feature type="transmembrane region" description="Helical" evidence="1">
    <location>
        <begin position="127"/>
        <end position="147"/>
    </location>
</feature>
<feature type="transmembrane region" description="Helical" evidence="1">
    <location>
        <begin position="166"/>
        <end position="186"/>
    </location>
</feature>
<feature type="transmembrane region" description="Helical" evidence="1">
    <location>
        <begin position="235"/>
        <end position="255"/>
    </location>
</feature>
<feature type="transmembrane region" description="Helical" evidence="1">
    <location>
        <begin position="262"/>
        <end position="282"/>
    </location>
</feature>
<feature type="transmembrane region" description="Helical" evidence="1">
    <location>
        <begin position="307"/>
        <end position="327"/>
    </location>
</feature>
<feature type="transmembrane region" description="Helical" evidence="1">
    <location>
        <begin position="356"/>
        <end position="376"/>
    </location>
</feature>
<feature type="transmembrane region" description="Helical" evidence="1">
    <location>
        <begin position="380"/>
        <end position="400"/>
    </location>
</feature>
<feature type="transmembrane region" description="Helical" evidence="1">
    <location>
        <begin position="415"/>
        <end position="435"/>
    </location>
</feature>
<feature type="transmembrane region" description="Helical" evidence="1">
    <location>
        <begin position="451"/>
        <end position="471"/>
    </location>
</feature>
<feature type="transmembrane region" description="Helical" evidence="1">
    <location>
        <begin position="484"/>
        <end position="504"/>
    </location>
</feature>
<feature type="transmembrane region" description="Helical" evidence="1">
    <location>
        <begin position="538"/>
        <end position="558"/>
    </location>
</feature>
<feature type="region of interest" description="Disordered" evidence="2">
    <location>
        <begin position="35"/>
        <end position="58"/>
    </location>
</feature>
<feature type="compositionally biased region" description="Low complexity" evidence="2">
    <location>
        <begin position="39"/>
        <end position="58"/>
    </location>
</feature>
<accession>Q8L7Z9</accession>
<comment type="function">
    <text evidence="3">Glutamate/malate translocator involved with DIT1 in primary ammonia assimilation and in the re-assimilation of ammonia generated by the photorespiratory pathway. Exports the end product of ammonia assimilation, glutamate, from plastids to the cytosol. The precursor for ammonia assimilation, 2-oxoglutarate, is imported from the cytosol by DIT1.</text>
</comment>
<comment type="biophysicochemical properties">
    <kinetics>
        <KM evidence="3">0.3 mM for malate</KM>
        <KM evidence="3">1.59 mM for glutamate</KM>
        <KM evidence="3">2.46 mM for 2-oxoglutarate</KM>
    </kinetics>
</comment>
<comment type="subcellular location">
    <subcellularLocation>
        <location evidence="4">Plastid</location>
        <location evidence="4">Chloroplast inner membrane</location>
        <topology evidence="4">Multi-pass membrane protein</topology>
    </subcellularLocation>
</comment>
<comment type="tissue specificity">
    <text evidence="3">Expressed in leaves.</text>
</comment>
<comment type="similarity">
    <text evidence="4">Belongs to the SLC13A/DASS transporter (TC 2.A.47) family. DIT1 subfamily.</text>
</comment>
<organism>
    <name type="scientific">Spinacia oleracea</name>
    <name type="common">Spinach</name>
    <dbReference type="NCBI Taxonomy" id="3562"/>
    <lineage>
        <taxon>Eukaryota</taxon>
        <taxon>Viridiplantae</taxon>
        <taxon>Streptophyta</taxon>
        <taxon>Embryophyta</taxon>
        <taxon>Tracheophyta</taxon>
        <taxon>Spermatophyta</taxon>
        <taxon>Magnoliopsida</taxon>
        <taxon>eudicotyledons</taxon>
        <taxon>Gunneridae</taxon>
        <taxon>Pentapetalae</taxon>
        <taxon>Caryophyllales</taxon>
        <taxon>Chenopodiaceae</taxon>
        <taxon>Chenopodioideae</taxon>
        <taxon>Anserineae</taxon>
        <taxon>Spinacia</taxon>
    </lineage>
</organism>
<keyword id="KW-0150">Chloroplast</keyword>
<keyword id="KW-0472">Membrane</keyword>
<keyword id="KW-0934">Plastid</keyword>
<keyword id="KW-1001">Plastid inner membrane</keyword>
<keyword id="KW-1185">Reference proteome</keyword>
<keyword id="KW-0809">Transit peptide</keyword>
<keyword id="KW-0812">Transmembrane</keyword>
<keyword id="KW-1133">Transmembrane helix</keyword>
<keyword id="KW-0813">Transport</keyword>
<name>DIT2_SPIOL</name>
<proteinExistence type="evidence at protein level"/>
<evidence type="ECO:0000255" key="1"/>
<evidence type="ECO:0000256" key="2">
    <source>
        <dbReference type="SAM" id="MobiDB-lite"/>
    </source>
</evidence>
<evidence type="ECO:0000269" key="3">
    <source>
    </source>
</evidence>
<evidence type="ECO:0000305" key="4"/>